<comment type="function">
    <text evidence="1">Catalyzes the transfer of the enolpyruvyl moiety of phosphoenolpyruvate (PEP) to the 5-hydroxyl of shikimate-3-phosphate (S3P) to produce enolpyruvyl shikimate-3-phosphate and inorganic phosphate.</text>
</comment>
<comment type="catalytic activity">
    <reaction evidence="1">
        <text>3-phosphoshikimate + phosphoenolpyruvate = 5-O-(1-carboxyvinyl)-3-phosphoshikimate + phosphate</text>
        <dbReference type="Rhea" id="RHEA:21256"/>
        <dbReference type="ChEBI" id="CHEBI:43474"/>
        <dbReference type="ChEBI" id="CHEBI:57701"/>
        <dbReference type="ChEBI" id="CHEBI:58702"/>
        <dbReference type="ChEBI" id="CHEBI:145989"/>
        <dbReference type="EC" id="2.5.1.19"/>
    </reaction>
    <physiologicalReaction direction="left-to-right" evidence="1">
        <dbReference type="Rhea" id="RHEA:21257"/>
    </physiologicalReaction>
</comment>
<comment type="pathway">
    <text evidence="1">Metabolic intermediate biosynthesis; chorismate biosynthesis; chorismate from D-erythrose 4-phosphate and phosphoenolpyruvate: step 6/7.</text>
</comment>
<comment type="subunit">
    <text evidence="1">Monomer.</text>
</comment>
<comment type="subcellular location">
    <subcellularLocation>
        <location evidence="1">Cytoplasm</location>
    </subcellularLocation>
</comment>
<comment type="similarity">
    <text evidence="1">Belongs to the EPSP synthase family.</text>
</comment>
<protein>
    <recommendedName>
        <fullName evidence="1">3-phosphoshikimate 1-carboxyvinyltransferase</fullName>
        <ecNumber evidence="1">2.5.1.19</ecNumber>
    </recommendedName>
    <alternativeName>
        <fullName evidence="1">5-enolpyruvylshikimate-3-phosphate synthase</fullName>
        <shortName evidence="1">EPSP synthase</shortName>
        <shortName evidence="1">EPSPS</shortName>
    </alternativeName>
</protein>
<reference key="1">
    <citation type="journal article" date="2011" name="PLoS ONE">
        <title>The genome of Akkermansia muciniphila, a dedicated intestinal mucin degrader, and its use in exploring intestinal metagenomes.</title>
        <authorList>
            <person name="van Passel M.W."/>
            <person name="Kant R."/>
            <person name="Zoetendal E.G."/>
            <person name="Plugge C.M."/>
            <person name="Derrien M."/>
            <person name="Malfatti S.A."/>
            <person name="Chain P.S."/>
            <person name="Woyke T."/>
            <person name="Palva A."/>
            <person name="de Vos W.M."/>
            <person name="Smidt H."/>
        </authorList>
    </citation>
    <scope>NUCLEOTIDE SEQUENCE [LARGE SCALE GENOMIC DNA]</scope>
    <source>
        <strain>ATCC BAA-835 / DSM 22959 / JCM 33894 / BCRC 81048 / CCUG 64013 / CIP 107961 / Muc</strain>
    </source>
</reference>
<gene>
    <name evidence="1" type="primary">aroA</name>
    <name type="ordered locus">Amuc_1894</name>
</gene>
<dbReference type="EC" id="2.5.1.19" evidence="1"/>
<dbReference type="EMBL" id="CP001071">
    <property type="protein sequence ID" value="ACD05708.1"/>
    <property type="molecule type" value="Genomic_DNA"/>
</dbReference>
<dbReference type="RefSeq" id="WP_012420922.1">
    <property type="nucleotide sequence ID" value="NZ_CP071807.1"/>
</dbReference>
<dbReference type="SMR" id="B2UN97"/>
<dbReference type="STRING" id="349741.Amuc_1894"/>
<dbReference type="PaxDb" id="349741-Amuc_1894"/>
<dbReference type="GeneID" id="60881480"/>
<dbReference type="KEGG" id="amu:Amuc_1894"/>
<dbReference type="eggNOG" id="COG0128">
    <property type="taxonomic scope" value="Bacteria"/>
</dbReference>
<dbReference type="HOGENOM" id="CLU_024321_0_1_0"/>
<dbReference type="OrthoDB" id="9809920at2"/>
<dbReference type="BioCyc" id="AMUC349741:G1GBX-2019-MONOMER"/>
<dbReference type="UniPathway" id="UPA00053">
    <property type="reaction ID" value="UER00089"/>
</dbReference>
<dbReference type="Proteomes" id="UP000001031">
    <property type="component" value="Chromosome"/>
</dbReference>
<dbReference type="GO" id="GO:0005737">
    <property type="term" value="C:cytoplasm"/>
    <property type="evidence" value="ECO:0007669"/>
    <property type="project" value="UniProtKB-SubCell"/>
</dbReference>
<dbReference type="GO" id="GO:0003866">
    <property type="term" value="F:3-phosphoshikimate 1-carboxyvinyltransferase activity"/>
    <property type="evidence" value="ECO:0007669"/>
    <property type="project" value="UniProtKB-UniRule"/>
</dbReference>
<dbReference type="GO" id="GO:0008652">
    <property type="term" value="P:amino acid biosynthetic process"/>
    <property type="evidence" value="ECO:0007669"/>
    <property type="project" value="UniProtKB-KW"/>
</dbReference>
<dbReference type="GO" id="GO:0009073">
    <property type="term" value="P:aromatic amino acid family biosynthetic process"/>
    <property type="evidence" value="ECO:0007669"/>
    <property type="project" value="UniProtKB-KW"/>
</dbReference>
<dbReference type="GO" id="GO:0009423">
    <property type="term" value="P:chorismate biosynthetic process"/>
    <property type="evidence" value="ECO:0007669"/>
    <property type="project" value="UniProtKB-UniRule"/>
</dbReference>
<dbReference type="CDD" id="cd01556">
    <property type="entry name" value="EPSP_synthase"/>
    <property type="match status" value="1"/>
</dbReference>
<dbReference type="FunFam" id="3.65.10.10:FF:000005">
    <property type="entry name" value="3-phosphoshikimate 1-carboxyvinyltransferase"/>
    <property type="match status" value="1"/>
</dbReference>
<dbReference type="Gene3D" id="3.65.10.10">
    <property type="entry name" value="Enolpyruvate transferase domain"/>
    <property type="match status" value="2"/>
</dbReference>
<dbReference type="HAMAP" id="MF_00210">
    <property type="entry name" value="EPSP_synth"/>
    <property type="match status" value="1"/>
</dbReference>
<dbReference type="InterPro" id="IPR001986">
    <property type="entry name" value="Enolpyruvate_Tfrase_dom"/>
</dbReference>
<dbReference type="InterPro" id="IPR036968">
    <property type="entry name" value="Enolpyruvate_Tfrase_sf"/>
</dbReference>
<dbReference type="InterPro" id="IPR006264">
    <property type="entry name" value="EPSP_synthase"/>
</dbReference>
<dbReference type="InterPro" id="IPR023193">
    <property type="entry name" value="EPSP_synthase_CS"/>
</dbReference>
<dbReference type="InterPro" id="IPR013792">
    <property type="entry name" value="RNA3'P_cycl/enolpyr_Trfase_a/b"/>
</dbReference>
<dbReference type="NCBIfam" id="TIGR01356">
    <property type="entry name" value="aroA"/>
    <property type="match status" value="1"/>
</dbReference>
<dbReference type="PANTHER" id="PTHR21090">
    <property type="entry name" value="AROM/DEHYDROQUINATE SYNTHASE"/>
    <property type="match status" value="1"/>
</dbReference>
<dbReference type="PANTHER" id="PTHR21090:SF5">
    <property type="entry name" value="PENTAFUNCTIONAL AROM POLYPEPTIDE"/>
    <property type="match status" value="1"/>
</dbReference>
<dbReference type="Pfam" id="PF00275">
    <property type="entry name" value="EPSP_synthase"/>
    <property type="match status" value="1"/>
</dbReference>
<dbReference type="PIRSF" id="PIRSF000505">
    <property type="entry name" value="EPSPS"/>
    <property type="match status" value="1"/>
</dbReference>
<dbReference type="SUPFAM" id="SSF55205">
    <property type="entry name" value="EPT/RTPC-like"/>
    <property type="match status" value="1"/>
</dbReference>
<dbReference type="PROSITE" id="PS00104">
    <property type="entry name" value="EPSP_SYNTHASE_1"/>
    <property type="match status" value="1"/>
</dbReference>
<dbReference type="PROSITE" id="PS00885">
    <property type="entry name" value="EPSP_SYNTHASE_2"/>
    <property type="match status" value="1"/>
</dbReference>
<organism>
    <name type="scientific">Akkermansia muciniphila (strain ATCC BAA-835 / DSM 22959 / JCM 33894 / BCRC 81048 / CCUG 64013 / CIP 107961 / Muc)</name>
    <dbReference type="NCBI Taxonomy" id="349741"/>
    <lineage>
        <taxon>Bacteria</taxon>
        <taxon>Pseudomonadati</taxon>
        <taxon>Verrucomicrobiota</taxon>
        <taxon>Verrucomicrobiia</taxon>
        <taxon>Verrucomicrobiales</taxon>
        <taxon>Akkermansiaceae</taxon>
        <taxon>Akkermansia</taxon>
    </lineage>
</organism>
<feature type="chain" id="PRO_1000099661" description="3-phosphoshikimate 1-carboxyvinyltransferase">
    <location>
        <begin position="1"/>
        <end position="435"/>
    </location>
</feature>
<feature type="active site" description="Proton acceptor" evidence="1">
    <location>
        <position position="323"/>
    </location>
</feature>
<feature type="binding site" evidence="1">
    <location>
        <position position="21"/>
    </location>
    <ligand>
        <name>3-phosphoshikimate</name>
        <dbReference type="ChEBI" id="CHEBI:145989"/>
    </ligand>
</feature>
<feature type="binding site" evidence="1">
    <location>
        <position position="21"/>
    </location>
    <ligand>
        <name>phosphoenolpyruvate</name>
        <dbReference type="ChEBI" id="CHEBI:58702"/>
    </ligand>
</feature>
<feature type="binding site" evidence="1">
    <location>
        <position position="22"/>
    </location>
    <ligand>
        <name>3-phosphoshikimate</name>
        <dbReference type="ChEBI" id="CHEBI:145989"/>
    </ligand>
</feature>
<feature type="binding site" evidence="1">
    <location>
        <position position="26"/>
    </location>
    <ligand>
        <name>3-phosphoshikimate</name>
        <dbReference type="ChEBI" id="CHEBI:145989"/>
    </ligand>
</feature>
<feature type="binding site" evidence="1">
    <location>
        <position position="99"/>
    </location>
    <ligand>
        <name>phosphoenolpyruvate</name>
        <dbReference type="ChEBI" id="CHEBI:58702"/>
    </ligand>
</feature>
<feature type="binding site" evidence="1">
    <location>
        <position position="127"/>
    </location>
    <ligand>
        <name>phosphoenolpyruvate</name>
        <dbReference type="ChEBI" id="CHEBI:58702"/>
    </ligand>
</feature>
<feature type="binding site" evidence="1">
    <location>
        <position position="173"/>
    </location>
    <ligand>
        <name>3-phosphoshikimate</name>
        <dbReference type="ChEBI" id="CHEBI:145989"/>
    </ligand>
</feature>
<feature type="binding site" evidence="1">
    <location>
        <position position="175"/>
    </location>
    <ligand>
        <name>3-phosphoshikimate</name>
        <dbReference type="ChEBI" id="CHEBI:145989"/>
    </ligand>
</feature>
<feature type="binding site" evidence="1">
    <location>
        <position position="175"/>
    </location>
    <ligand>
        <name>phosphoenolpyruvate</name>
        <dbReference type="ChEBI" id="CHEBI:58702"/>
    </ligand>
</feature>
<feature type="binding site" evidence="1">
    <location>
        <position position="323"/>
    </location>
    <ligand>
        <name>3-phosphoshikimate</name>
        <dbReference type="ChEBI" id="CHEBI:145989"/>
    </ligand>
</feature>
<feature type="binding site" evidence="1">
    <location>
        <position position="350"/>
    </location>
    <ligand>
        <name>3-phosphoshikimate</name>
        <dbReference type="ChEBI" id="CHEBI:145989"/>
    </ligand>
</feature>
<feature type="binding site" evidence="1">
    <location>
        <position position="354"/>
    </location>
    <ligand>
        <name>phosphoenolpyruvate</name>
        <dbReference type="ChEBI" id="CHEBI:58702"/>
    </ligand>
</feature>
<feature type="binding site" evidence="1">
    <location>
        <position position="396"/>
    </location>
    <ligand>
        <name>phosphoenolpyruvate</name>
        <dbReference type="ChEBI" id="CHEBI:58702"/>
    </ligand>
</feature>
<accession>B2UN97</accession>
<keyword id="KW-0028">Amino-acid biosynthesis</keyword>
<keyword id="KW-0057">Aromatic amino acid biosynthesis</keyword>
<keyword id="KW-0963">Cytoplasm</keyword>
<keyword id="KW-1185">Reference proteome</keyword>
<keyword id="KW-0808">Transferase</keyword>
<proteinExistence type="inferred from homology"/>
<evidence type="ECO:0000255" key="1">
    <source>
        <dbReference type="HAMAP-Rule" id="MF_00210"/>
    </source>
</evidence>
<name>AROA_AKKM8</name>
<sequence length="435" mass="46106">MNLHSHSISSLQGALTVPGDKSISHRAAILGGLAEGVTEVDNFLCSEDCLNTLRAMEQLGAKVDVLEERQGYGPVRFRITGVAMSPKAPERPIDCGNSGTGMRLLAGMLAACPFDSEMFGDASLSSRPMGRIMQPLEQMGARIEARGAKPGCAPLSIHGGRVHPISYTLPMASAQVKSAILLAGMFADGTTTVRQPAVTRDHTERLFRHFGVPCTVDGLTVGTCGPALPVAHDLTVPADISSAAFWMVAAASRPGSRLTLRQVGLNKTRNAVISALQRMGARMDIVPTSPEDAGEPYGDITVYGSDSLHGTSLLPEEIPNLIDEIPILAVAGALGRGDFIVRNARELRVKETDRIATTAANLRLMGVDVEEFDDGMVVHGGTPLKGTELSSYGDHRIAMSFLVAGLSAQGETVVTDAECINTSYPGFERDLAQFL</sequence>